<accession>A0A2I2F2N6</accession>
<reference key="1">
    <citation type="submission" date="2017-12" db="EMBL/GenBank/DDBJ databases">
        <authorList>
            <consortium name="DOE Joint Genome Institute"/>
            <person name="Haridas S."/>
            <person name="Kjaerbolling I."/>
            <person name="Vesth T.C."/>
            <person name="Frisvad J.C."/>
            <person name="Nybo J.L."/>
            <person name="Theobald S."/>
            <person name="Kuo A."/>
            <person name="Bowyer P."/>
            <person name="Matsuda Y."/>
            <person name="Mondo S."/>
            <person name="Lyhne E.K."/>
            <person name="Kogle M.E."/>
            <person name="Clum A."/>
            <person name="Lipzen A."/>
            <person name="Salamov A."/>
            <person name="Ngan C.Y."/>
            <person name="Daum C."/>
            <person name="Chiniquy J."/>
            <person name="Barry K."/>
            <person name="LaButti K."/>
            <person name="Simmons B.A."/>
            <person name="Magnuson J.K."/>
            <person name="Mortensen U.H."/>
            <person name="Larsen T.O."/>
            <person name="Grigoriev I.V."/>
            <person name="Baker S.E."/>
            <person name="Andersen M.R."/>
            <person name="Nordberg H.P."/>
            <person name="Cantor M.N."/>
            <person name="Hua S.X."/>
        </authorList>
    </citation>
    <scope>NUCLEOTIDE SEQUENCE [LARGE SCALE GENOMIC DNA]</scope>
    <source>
        <strain>CBS 102.13</strain>
    </source>
</reference>
<reference key="2">
    <citation type="journal article" date="2023" name="Angew. Chem. Int. Ed.">
        <title>Discovery of a Unique Flavonoid Biosynthesis Mechanism in Fungi by Genome Mining.</title>
        <authorList>
            <person name="Zhang W."/>
            <person name="Zhang X."/>
            <person name="Feng D."/>
            <person name="Liang Y."/>
            <person name="Wu Z."/>
            <person name="Du S."/>
            <person name="Zhou Y."/>
            <person name="Geng C."/>
            <person name="Men P."/>
            <person name="Fu C."/>
            <person name="Huang X."/>
            <person name="Lu X."/>
        </authorList>
    </citation>
    <scope>FUNCTION</scope>
    <scope>CATALYTIC ACTIVITY</scope>
    <scope>DISRUPTION PHENOTYPE</scope>
    <scope>PATHWAY</scope>
</reference>
<comment type="function">
    <text evidence="6">Hybrid PKS-NRPS synthetase; part of the gene cluster that mediates the biosynthesis of chlorflavonin, a fungal flavonoid with acetolactate synthase inhibitory activity (PubMed:36704842). Within the pathway, the PKS-NRPS cfoA, is responsible for the generation of the key precursor chalcone (PubMed:36704842). The adenylation (A) domain activates benzoic acid or p-hydroxybenzoic acid which are transferred to the thiol group of the pantetheinyl residue of the T domain, and further transferred to the adjacent PKS portion of cfoA. Within the PKS portion of cfoA, benzoic acid or p-hydroxybenzoic acid act as starter units for respectively four malonyl-CoA molecules for elongation by the AT and KS domains. Afterwards, chalcone is cyclized through Claisen condensation and thereby released either spontaneously or catalyzed by the TE domain (PubMed:36704842). Then, a new type of chalcone isomerase, cfoK, catalyzes the conversion of the chalcone into a flavanone by a histidine-mediated oxa-Michael addition mechanism. The desaturation of flavanone to flavone is catalyzed by a new type of flavone synthase, the flavin mononucleotide (FMN)-dependent oxidoreductase cfoJ. Monooxygenases cfoF, cfoG, and P450 cfoH are responsible for the hydroxylation of the flavonoid skeleton at sites C3, C8, and C2', respectively. Like cfoF, the dehydratase cfoI plays also a role in the hydroxylation of position C3. Methyltransferases cfoB, cfoC, and cfoD then catalyze the methylation of C7-OH, C8-OH, and C3-OH, respectively. Finally, the monooxygenase cfoE is responsible for the chlorination of flavonoid at position C3' (PubMed:36704842).</text>
</comment>
<comment type="cofactor">
    <cofactor evidence="2">
        <name>pantetheine 4'-phosphate</name>
        <dbReference type="ChEBI" id="CHEBI:47942"/>
    </cofactor>
</comment>
<comment type="pathway">
    <text evidence="6">Secondary metabolite biosynthesis; flavonoid biosynthesis.</text>
</comment>
<comment type="domain">
    <text evidence="9">NRP synthetases are composed of discrete domains (adenylation (A), thiolation (T) or peptidyl carrier protein (PCP) and condensation (C) domains) which when grouped together are referred to as a single module. Each module is responsible for the recognition (via the A domain) and incorporation of a single amino acid into the growing peptide product. Thus, an NRP synthetase is generally composed of one or more modules and can terminate in a thioesterase domain (TE) that releases the newly synthesized peptide from the enzyme. Occasionally, epimerase (E) domains (responsible for L- to D- amino acid conversion) are present within the NRP synthetase. FnsA also contains a polyketide synthase module (PKS) consisting of several catalytic domains including a ketoacyl synthase domain (KS), an acyl transferase domain (AT), a dehydratase domain (DH), a ketoreductase domain (KR), and a C-terminal thioesterase (TE) domain. CfoAS has the following architecture: A-T-KS-AT-DH-KR-ACP-TE.</text>
</comment>
<comment type="disruption phenotype">
    <text evidence="6">Impairs the production of chlorflavonin and its direct precursors.</text>
</comment>
<comment type="similarity">
    <text evidence="8">In the N-terminal section; belongs to the NRP synthetase family.</text>
</comment>
<evidence type="ECO:0000255" key="1"/>
<evidence type="ECO:0000255" key="2">
    <source>
        <dbReference type="PROSITE-ProRule" id="PRU00258"/>
    </source>
</evidence>
<evidence type="ECO:0000255" key="3">
    <source>
        <dbReference type="PROSITE-ProRule" id="PRU01348"/>
    </source>
</evidence>
<evidence type="ECO:0000255" key="4">
    <source>
        <dbReference type="PROSITE-ProRule" id="PRU01363"/>
    </source>
</evidence>
<evidence type="ECO:0000256" key="5">
    <source>
        <dbReference type="SAM" id="MobiDB-lite"/>
    </source>
</evidence>
<evidence type="ECO:0000269" key="6">
    <source>
    </source>
</evidence>
<evidence type="ECO:0000303" key="7">
    <source>
    </source>
</evidence>
<evidence type="ECO:0000305" key="8"/>
<evidence type="ECO:0000305" key="9">
    <source>
    </source>
</evidence>
<feature type="chain" id="PRO_0000459540" description="Chalcone synthase cfoA">
    <location>
        <begin position="1"/>
        <end position="2748"/>
    </location>
</feature>
<feature type="domain" description="Carrier 1" evidence="2 9">
    <location>
        <begin position="535"/>
        <end position="620"/>
    </location>
</feature>
<feature type="domain" description="Ketosynthase family 3 (KS3)" evidence="3">
    <location>
        <begin position="641"/>
        <end position="1073"/>
    </location>
</feature>
<feature type="domain" description="Malonyl-CoA:ACP transacylase (MAT)" evidence="1 9">
    <location>
        <begin position="1196"/>
        <end position="1489"/>
    </location>
</feature>
<feature type="domain" description="PKS/mFAS DH" evidence="4">
    <location>
        <begin position="1563"/>
        <end position="1866"/>
    </location>
</feature>
<feature type="domain" description="Ketoreductase (KR)" evidence="1 9">
    <location>
        <begin position="2031"/>
        <end position="2210"/>
    </location>
</feature>
<feature type="domain" description="Carrier 2" evidence="2">
    <location>
        <begin position="2305"/>
        <end position="2383"/>
    </location>
</feature>
<feature type="region of interest" description="Adenylation (A) domain" evidence="1 9">
    <location>
        <begin position="13"/>
        <end position="511"/>
    </location>
</feature>
<feature type="region of interest" description="Dehydratase (DH) domain" evidence="1 9">
    <location>
        <begin position="1561"/>
        <end position="1842"/>
    </location>
</feature>
<feature type="region of interest" description="N-terminal hotdog fold" evidence="4">
    <location>
        <begin position="1563"/>
        <end position="1707"/>
    </location>
</feature>
<feature type="region of interest" description="C-terminal hotdog fold" evidence="4">
    <location>
        <begin position="1722"/>
        <end position="1866"/>
    </location>
</feature>
<feature type="region of interest" description="Disordered" evidence="5">
    <location>
        <begin position="2386"/>
        <end position="2426"/>
    </location>
</feature>
<feature type="region of interest" description="Thioester reductase (TE) domain" evidence="1 9">
    <location>
        <begin position="2519"/>
        <end position="2742"/>
    </location>
</feature>
<feature type="compositionally biased region" description="Low complexity" evidence="5">
    <location>
        <begin position="2396"/>
        <end position="2407"/>
    </location>
</feature>
<feature type="active site" description="For beta-ketoacyl synthase activity" evidence="3">
    <location>
        <position position="813"/>
    </location>
</feature>
<feature type="active site" description="For beta-ketoacyl synthase activity" evidence="3">
    <location>
        <position position="948"/>
    </location>
</feature>
<feature type="active site" description="For beta-ketoacyl synthase activity" evidence="3">
    <location>
        <position position="995"/>
    </location>
</feature>
<feature type="active site" description="Proton acceptor; for dehydratase activity" evidence="4">
    <location>
        <position position="1595"/>
    </location>
</feature>
<feature type="active site" description="Proton donor; for dehydratase activity" evidence="4">
    <location>
        <position position="1784"/>
    </location>
</feature>
<feature type="modified residue" description="O-(pantetheine 4'-phosphoryl)serine" evidence="2">
    <location>
        <position position="579"/>
    </location>
</feature>
<feature type="modified residue" description="O-(pantetheine 4'-phosphoryl)serine" evidence="2">
    <location>
        <position position="2342"/>
    </location>
</feature>
<organism>
    <name type="scientific">Aspergillus candidus</name>
    <dbReference type="NCBI Taxonomy" id="41067"/>
    <lineage>
        <taxon>Eukaryota</taxon>
        <taxon>Fungi</taxon>
        <taxon>Dikarya</taxon>
        <taxon>Ascomycota</taxon>
        <taxon>Pezizomycotina</taxon>
        <taxon>Eurotiomycetes</taxon>
        <taxon>Eurotiomycetidae</taxon>
        <taxon>Eurotiales</taxon>
        <taxon>Aspergillaceae</taxon>
        <taxon>Aspergillus</taxon>
        <taxon>Aspergillus subgen. Circumdati</taxon>
    </lineage>
</organism>
<sequence length="2748" mass="294899">MSRPELIPDILIRHAGESCEKVAFAGPGWTITYGDLEKRTRRLAAHLVHAGIGRGDFVAIVLGRCLQTVESVLAITRAGAVGVPLDSRSPSSELAKVLEHSGARVIITDGRYLTTVRTAAAEGSLIILSTEEIPKMDAIEGKHQIARYQDWIEDAEYSTLDIQIDNLREDEQAFLHYTSGTTSLPKGVLSNQRSWLLNVNSLVSAFELTPEDRFFWPLPLFHCIGHLLCIMGTVVVGASAYLPDADQTLFDSLRDTNAQETTLIVGAPTTFHDLMDAAKRSDPTSPLFLPRLRACMYAGSSASGSLGAQIKEYLGVPLLNNYGCTEGCGSIAVSRTGHTYRHNSSISLLPHWEIKLVDPDGHPVQDGEQGEVCIGGPGLMLEYYRETRTPFTPDGWYPTGDIAIRSSSAAGAELTLVGRRKEIIIRGGENIHPHELEHVLLRHPGVADVVVAGMPHRLLGETPAAFIVKSVANMDFDLSALLAACREVLPDYKIPTAFYEIDTVPRTVIGKPKRLTMTAYTNKPLTARSMLQSRDLIEALVMAETVSACTIDAGPESESNTDWLRRHFDQPFSFLGLSSMAGVVLRDRLAGLTGLDDLPNTLVFDYSTPAAVSTYLHGRLLGPKTAPLPSSTPTTKADSEVEPIAIVSMACRYPGGISSPEDLWQLVSDEIDATTDFPDDRGWDVESLYSTDPDTPNTSTTKRGGFLPDFARFDAGLFGMAPREALATDPQQRLLLETTWELAERGGIAPLSLQGSQTGVFVGTLYEDYEENGFGNDELEAHLGLGSSSSVVSGRVSYCFGLHGPSLVVSTGCSSSLVAIHLAAQSLRNRECSLTIAGGITTMATPRPFTMFSRRRGLSSDGRCRAYSSDASGTGWSEGVGLLLLERLSDAKRNGHQILGLIRGSAVNSDGKSNGLTAPNGPAQQMCIQSALAQAGMSPENVDVLEGHGTATPLGDPIEVQAVISAYGNGDRKNIDSARRSESLLLGSIKSNIGHTQAAAAVAGIIKMVQAMRHGVAPASLHIREPSPQIDWEGSGVELLSKARQWPSVNRPRRAAVSSFGIGGTNSHIILEQPEPVQMQDSTSKRISAAFPWLISGASEVALRAQAHSLLTAWREADSNTFSPLRNQEPADIAFSLATARSALKYRATVTYALGANMHNQIETTLERLAQGEPHPDVMTAHTNTTGNKPRLACLFSGQGSWMPTIDTLEELRATFPVFSAAFQAACDEVDMHLECPLVHAITDGSMLDRTDFAQATLFVFEVAMFRLLESFGIRPDFVAGHSLGEIAAAHAAGALSLRDAATIVTTRAKLMASLPPNGGMVSIAATEAEVAIELSQFDGIASIAAVNSQTSVVVSGTQEAIQAVADRFTSLGRRATVLRNVKHGFHSQLMDHILPGLENALPSSMESENPTTIPLVSTVTGKRAAAAQLRSSNHWIRHVSEPVRFADAVNELRSKEHVSVFVEIGPSAVLSPHVPDAAATHGTVDKLLGMLGQLWARGVPVDWQAVFDGSGARFVDLPVYAFQRQRYWLPYTPLLPVTSMGAVTEQAQERTSGVFGGSRLGHEMIFNATSIPGTGTIICSGYLSTARQLWLRDHIIGGQSLVPASAFTELALRAAQECAERSEISSLILDEMIVIASLDLSSAEDEEQGEPGEVEIQVLIGESQPEDAATQNQRTVDVYSRPRGVATQHEWTQHATGTFQLISQPNPSQESFINGTDPTKAESDVNISEAYAVLSGAGLTYGPSFQGVRAIWRLHDNDLLVQIDPPQDQSQMSTSILHPAVLDAALHASTLASAEKVASGDIRLPFSFRGIQVFEAVGASSPILARIHHIGENSFSMTMTDHSSGVVLAKISEVQLRTWQPTVAGGDLYRLEWIDFASKPTTSTTTDKIVRFESSHDVDATAVSKAVHEGLAEALHAVHEWRADKSPAADEVRLVFVTERATSTGGNSDIDLVAAAVWGFVRSAQAEFGGARVALIDLDGSSESEEALTAALVSREEIVAVHGGKTMIPRLGKQPSVTEPPQAMSLDVSGTVLITGGTGGLGAMLSRDIVHAHGAKSLLLVSRSGIEATGARELYDELRSANAAVRVEACDVSDRAQLAALLDNHNHHQYPPITTVIHCAGVVSDAFLGSQTPERVSSVLRPKVDAAWNLHDLVPDTVRSFVLFSSYVSVLGNEGQAAYSAGNAFLDALARFRVARGLPALSLAWGPWANDAGMAAGSKLDAIPPRIANARPFTDQQGLSLLYRALHMQATNPSEPVLLPLLLRGPFPLVPSAGPAYKTKTNAKRESGSSAVWRRNIAAVPSENRHDTLLGLVRDEIAAVLGYQGQDMLPDQRLDDLGFDSFTSVMLTNRLRVLTGLSYLPVTLALDYDTTTALVEYLLPRIEAEPQPEVDTDSDASTTAGDTSVSRDSGKEDELSPSSSVTTLALEEQDDLNPEIFRGLATIHRRLSQLEQYTAAADLLASAALAMPTFPKTGTVLSSYAAEPQRLATGPSASSNSELPLPLVFIAPFFPRIKIEGVGLSVYSNLASAMNGKRDVFELPHPEAQAVPSDLGTLADLHVHTIRKHFSDRPGIILAGYSAGGTVAYAVASKLANAESEQPRLAGFVLVDTYLTMTGRGDPDWLNALPAEALVSRLQVPPSLGHPKGMGSDSLVGDLDVALAKVGGYFRALRDWDIGLHPLPDALSTLFVRAVDPSDKMPKDTDVWRPRWPRADLTVDVPGSHLALLDKRYAPGAAGEIERWAREDLNA</sequence>
<gene>
    <name evidence="7" type="primary">cfoA</name>
    <name type="ORF">BDW47DRAFT_128661</name>
</gene>
<name>CFOA_ASPCN</name>
<protein>
    <recommendedName>
        <fullName evidence="7">Chalcone synthase cfoA</fullName>
        <shortName evidence="7">CHS cfoA</shortName>
        <ecNumber evidence="6">2.3.1.-</ecNumber>
        <ecNumber evidence="6">6.3.2.-</ecNumber>
    </recommendedName>
    <alternativeName>
        <fullName evidence="7">Chlorflavonin biosynthesis cluster protein A</fullName>
    </alternativeName>
    <alternativeName>
        <fullName evidence="7">PKS-NRPS hybrid synthetase cfoA</fullName>
        <shortName evidence="7">PKS-NRPS cfoA</shortName>
    </alternativeName>
</protein>
<proteinExistence type="evidence at protein level"/>
<dbReference type="EC" id="2.3.1.-" evidence="6"/>
<dbReference type="EC" id="6.3.2.-" evidence="6"/>
<dbReference type="EMBL" id="KZ559171">
    <property type="protein sequence ID" value="PLB34856.1"/>
    <property type="molecule type" value="Genomic_DNA"/>
</dbReference>
<dbReference type="SMR" id="A0A2I2F2N6"/>
<dbReference type="STRING" id="41067.A0A2I2F2N6"/>
<dbReference type="OrthoDB" id="5334845at2759"/>
<dbReference type="UniPathway" id="UPA00154"/>
<dbReference type="Proteomes" id="UP000234585">
    <property type="component" value="Unassembled WGS sequence"/>
</dbReference>
<dbReference type="GO" id="GO:0004315">
    <property type="term" value="F:3-oxoacyl-[acyl-carrier-protein] synthase activity"/>
    <property type="evidence" value="ECO:0007669"/>
    <property type="project" value="InterPro"/>
</dbReference>
<dbReference type="GO" id="GO:0004312">
    <property type="term" value="F:fatty acid synthase activity"/>
    <property type="evidence" value="ECO:0007669"/>
    <property type="project" value="TreeGrafter"/>
</dbReference>
<dbReference type="GO" id="GO:0016874">
    <property type="term" value="F:ligase activity"/>
    <property type="evidence" value="ECO:0007669"/>
    <property type="project" value="UniProtKB-KW"/>
</dbReference>
<dbReference type="GO" id="GO:0016491">
    <property type="term" value="F:oxidoreductase activity"/>
    <property type="evidence" value="ECO:0007669"/>
    <property type="project" value="UniProtKB-KW"/>
</dbReference>
<dbReference type="GO" id="GO:0031177">
    <property type="term" value="F:phosphopantetheine binding"/>
    <property type="evidence" value="ECO:0007669"/>
    <property type="project" value="InterPro"/>
</dbReference>
<dbReference type="GO" id="GO:0006633">
    <property type="term" value="P:fatty acid biosynthetic process"/>
    <property type="evidence" value="ECO:0007669"/>
    <property type="project" value="InterPro"/>
</dbReference>
<dbReference type="GO" id="GO:0009813">
    <property type="term" value="P:flavonoid biosynthetic process"/>
    <property type="evidence" value="ECO:0007669"/>
    <property type="project" value="UniProtKB-UniPathway"/>
</dbReference>
<dbReference type="GO" id="GO:0030639">
    <property type="term" value="P:polyketide biosynthetic process"/>
    <property type="evidence" value="ECO:0007669"/>
    <property type="project" value="UniProtKB-ARBA"/>
</dbReference>
<dbReference type="GO" id="GO:0009403">
    <property type="term" value="P:toxin biosynthetic process"/>
    <property type="evidence" value="ECO:0007669"/>
    <property type="project" value="UniProtKB-ARBA"/>
</dbReference>
<dbReference type="CDD" id="cd08956">
    <property type="entry name" value="KR_3_FAS_SDR_x"/>
    <property type="match status" value="1"/>
</dbReference>
<dbReference type="CDD" id="cd00833">
    <property type="entry name" value="PKS"/>
    <property type="match status" value="1"/>
</dbReference>
<dbReference type="FunFam" id="3.40.47.10:FF:000019">
    <property type="entry name" value="Polyketide synthase type I"/>
    <property type="match status" value="1"/>
</dbReference>
<dbReference type="Gene3D" id="3.30.300.30">
    <property type="match status" value="1"/>
</dbReference>
<dbReference type="Gene3D" id="3.30.70.3290">
    <property type="match status" value="1"/>
</dbReference>
<dbReference type="Gene3D" id="3.40.47.10">
    <property type="match status" value="1"/>
</dbReference>
<dbReference type="Gene3D" id="1.10.1200.10">
    <property type="entry name" value="ACP-like"/>
    <property type="match status" value="2"/>
</dbReference>
<dbReference type="Gene3D" id="3.40.50.1820">
    <property type="entry name" value="alpha/beta hydrolase"/>
    <property type="match status" value="1"/>
</dbReference>
<dbReference type="Gene3D" id="3.40.366.10">
    <property type="entry name" value="Malonyl-Coenzyme A Acyl Carrier Protein, domain 2"/>
    <property type="match status" value="1"/>
</dbReference>
<dbReference type="Gene3D" id="3.40.50.12780">
    <property type="entry name" value="N-terminal domain of ligase-like"/>
    <property type="match status" value="1"/>
</dbReference>
<dbReference type="Gene3D" id="3.40.50.720">
    <property type="entry name" value="NAD(P)-binding Rossmann-like Domain"/>
    <property type="match status" value="1"/>
</dbReference>
<dbReference type="Gene3D" id="3.10.129.110">
    <property type="entry name" value="Polyketide synthase dehydratase"/>
    <property type="match status" value="1"/>
</dbReference>
<dbReference type="InterPro" id="IPR029058">
    <property type="entry name" value="AB_hydrolase_fold"/>
</dbReference>
<dbReference type="InterPro" id="IPR001227">
    <property type="entry name" value="Ac_transferase_dom_sf"/>
</dbReference>
<dbReference type="InterPro" id="IPR036736">
    <property type="entry name" value="ACP-like_sf"/>
</dbReference>
<dbReference type="InterPro" id="IPR014043">
    <property type="entry name" value="Acyl_transferase_dom"/>
</dbReference>
<dbReference type="InterPro" id="IPR016035">
    <property type="entry name" value="Acyl_Trfase/lysoPLipase"/>
</dbReference>
<dbReference type="InterPro" id="IPR025110">
    <property type="entry name" value="AMP-bd_C"/>
</dbReference>
<dbReference type="InterPro" id="IPR045851">
    <property type="entry name" value="AMP-bd_C_sf"/>
</dbReference>
<dbReference type="InterPro" id="IPR020845">
    <property type="entry name" value="AMP-binding_CS"/>
</dbReference>
<dbReference type="InterPro" id="IPR000873">
    <property type="entry name" value="AMP-dep_synth/lig_dom"/>
</dbReference>
<dbReference type="InterPro" id="IPR042099">
    <property type="entry name" value="ANL_N_sf"/>
</dbReference>
<dbReference type="InterPro" id="IPR018201">
    <property type="entry name" value="Ketoacyl_synth_AS"/>
</dbReference>
<dbReference type="InterPro" id="IPR014031">
    <property type="entry name" value="Ketoacyl_synth_C"/>
</dbReference>
<dbReference type="InterPro" id="IPR014030">
    <property type="entry name" value="Ketoacyl_synth_N"/>
</dbReference>
<dbReference type="InterPro" id="IPR016036">
    <property type="entry name" value="Malonyl_transacylase_ACP-bd"/>
</dbReference>
<dbReference type="InterPro" id="IPR036291">
    <property type="entry name" value="NAD(P)-bd_dom_sf"/>
</dbReference>
<dbReference type="InterPro" id="IPR032821">
    <property type="entry name" value="PKS_assoc"/>
</dbReference>
<dbReference type="InterPro" id="IPR020841">
    <property type="entry name" value="PKS_Beta-ketoAc_synthase_dom"/>
</dbReference>
<dbReference type="InterPro" id="IPR042104">
    <property type="entry name" value="PKS_dehydratase_sf"/>
</dbReference>
<dbReference type="InterPro" id="IPR020807">
    <property type="entry name" value="PKS_DH"/>
</dbReference>
<dbReference type="InterPro" id="IPR049551">
    <property type="entry name" value="PKS_DH_C"/>
</dbReference>
<dbReference type="InterPro" id="IPR049552">
    <property type="entry name" value="PKS_DH_N"/>
</dbReference>
<dbReference type="InterPro" id="IPR013968">
    <property type="entry name" value="PKS_KR"/>
</dbReference>
<dbReference type="InterPro" id="IPR049900">
    <property type="entry name" value="PKS_mFAS_DH"/>
</dbReference>
<dbReference type="InterPro" id="IPR050091">
    <property type="entry name" value="PKS_NRPS_Biosynth_Enz"/>
</dbReference>
<dbReference type="InterPro" id="IPR020806">
    <property type="entry name" value="PKS_PP-bd"/>
</dbReference>
<dbReference type="InterPro" id="IPR020802">
    <property type="entry name" value="PKS_thioesterase"/>
</dbReference>
<dbReference type="InterPro" id="IPR009081">
    <property type="entry name" value="PP-bd_ACP"/>
</dbReference>
<dbReference type="InterPro" id="IPR055123">
    <property type="entry name" value="SpnB-like_Rossmann"/>
</dbReference>
<dbReference type="InterPro" id="IPR001031">
    <property type="entry name" value="Thioesterase"/>
</dbReference>
<dbReference type="InterPro" id="IPR016039">
    <property type="entry name" value="Thiolase-like"/>
</dbReference>
<dbReference type="PANTHER" id="PTHR43775">
    <property type="entry name" value="FATTY ACID SYNTHASE"/>
    <property type="match status" value="1"/>
</dbReference>
<dbReference type="PANTHER" id="PTHR43775:SF51">
    <property type="entry name" value="INACTIVE PHENOLPHTHIOCEROL SYNTHESIS POLYKETIDE SYNTHASE TYPE I PKS1-RELATED"/>
    <property type="match status" value="1"/>
</dbReference>
<dbReference type="Pfam" id="PF00698">
    <property type="entry name" value="Acyl_transf_1"/>
    <property type="match status" value="1"/>
</dbReference>
<dbReference type="Pfam" id="PF00501">
    <property type="entry name" value="AMP-binding"/>
    <property type="match status" value="1"/>
</dbReference>
<dbReference type="Pfam" id="PF13193">
    <property type="entry name" value="AMP-binding_C"/>
    <property type="match status" value="1"/>
</dbReference>
<dbReference type="Pfam" id="PF16197">
    <property type="entry name" value="KAsynt_C_assoc"/>
    <property type="match status" value="1"/>
</dbReference>
<dbReference type="Pfam" id="PF00109">
    <property type="entry name" value="ketoacyl-synt"/>
    <property type="match status" value="1"/>
</dbReference>
<dbReference type="Pfam" id="PF02801">
    <property type="entry name" value="Ketoacyl-synt_C"/>
    <property type="match status" value="1"/>
</dbReference>
<dbReference type="Pfam" id="PF08659">
    <property type="entry name" value="KR"/>
    <property type="match status" value="1"/>
</dbReference>
<dbReference type="Pfam" id="PF21089">
    <property type="entry name" value="PKS_DH_N"/>
    <property type="match status" value="1"/>
</dbReference>
<dbReference type="Pfam" id="PF00550">
    <property type="entry name" value="PP-binding"/>
    <property type="match status" value="1"/>
</dbReference>
<dbReference type="Pfam" id="PF14765">
    <property type="entry name" value="PS-DH"/>
    <property type="match status" value="1"/>
</dbReference>
<dbReference type="Pfam" id="PF22953">
    <property type="entry name" value="SpnB_Rossmann"/>
    <property type="match status" value="1"/>
</dbReference>
<dbReference type="Pfam" id="PF00975">
    <property type="entry name" value="Thioesterase"/>
    <property type="match status" value="1"/>
</dbReference>
<dbReference type="SMART" id="SM00827">
    <property type="entry name" value="PKS_AT"/>
    <property type="match status" value="1"/>
</dbReference>
<dbReference type="SMART" id="SM00826">
    <property type="entry name" value="PKS_DH"/>
    <property type="match status" value="1"/>
</dbReference>
<dbReference type="SMART" id="SM00822">
    <property type="entry name" value="PKS_KR"/>
    <property type="match status" value="1"/>
</dbReference>
<dbReference type="SMART" id="SM00825">
    <property type="entry name" value="PKS_KS"/>
    <property type="match status" value="1"/>
</dbReference>
<dbReference type="SMART" id="SM00823">
    <property type="entry name" value="PKS_PP"/>
    <property type="match status" value="2"/>
</dbReference>
<dbReference type="SMART" id="SM00824">
    <property type="entry name" value="PKS_TE"/>
    <property type="match status" value="1"/>
</dbReference>
<dbReference type="SUPFAM" id="SSF56801">
    <property type="entry name" value="Acetyl-CoA synthetase-like"/>
    <property type="match status" value="1"/>
</dbReference>
<dbReference type="SUPFAM" id="SSF47336">
    <property type="entry name" value="ACP-like"/>
    <property type="match status" value="2"/>
</dbReference>
<dbReference type="SUPFAM" id="SSF53474">
    <property type="entry name" value="alpha/beta-Hydrolases"/>
    <property type="match status" value="1"/>
</dbReference>
<dbReference type="SUPFAM" id="SSF52151">
    <property type="entry name" value="FabD/lysophospholipase-like"/>
    <property type="match status" value="1"/>
</dbReference>
<dbReference type="SUPFAM" id="SSF51735">
    <property type="entry name" value="NAD(P)-binding Rossmann-fold domains"/>
    <property type="match status" value="2"/>
</dbReference>
<dbReference type="SUPFAM" id="SSF55048">
    <property type="entry name" value="Probable ACP-binding domain of malonyl-CoA ACP transacylase"/>
    <property type="match status" value="1"/>
</dbReference>
<dbReference type="SUPFAM" id="SSF53901">
    <property type="entry name" value="Thiolase-like"/>
    <property type="match status" value="1"/>
</dbReference>
<dbReference type="PROSITE" id="PS00455">
    <property type="entry name" value="AMP_BINDING"/>
    <property type="match status" value="1"/>
</dbReference>
<dbReference type="PROSITE" id="PS50075">
    <property type="entry name" value="CARRIER"/>
    <property type="match status" value="2"/>
</dbReference>
<dbReference type="PROSITE" id="PS00606">
    <property type="entry name" value="KS3_1"/>
    <property type="match status" value="1"/>
</dbReference>
<dbReference type="PROSITE" id="PS52004">
    <property type="entry name" value="KS3_2"/>
    <property type="match status" value="1"/>
</dbReference>
<dbReference type="PROSITE" id="PS52019">
    <property type="entry name" value="PKS_MFAS_DH"/>
    <property type="match status" value="1"/>
</dbReference>
<keyword id="KW-0284">Flavonoid biosynthesis</keyword>
<keyword id="KW-0436">Ligase</keyword>
<keyword id="KW-0511">Multifunctional enzyme</keyword>
<keyword id="KW-0560">Oxidoreductase</keyword>
<keyword id="KW-0596">Phosphopantetheine</keyword>
<keyword id="KW-0597">Phosphoprotein</keyword>
<keyword id="KW-1185">Reference proteome</keyword>
<keyword id="KW-0808">Transferase</keyword>